<name>PHNS_DESMU</name>
<reference key="1">
    <citation type="journal article" date="1987" name="Biochem. Biophys. Res. Commun.">
        <title>Identification of three classes of hydrogenase in the genus, Desulfovibrio.</title>
        <authorList>
            <person name="Prickril B.C."/>
            <person name="He S.H."/>
            <person name="Li C."/>
            <person name="Menon N.K."/>
            <person name="Choi E.S."/>
            <person name="Przybyla A.E."/>
            <person name="Dervartanian D.V."/>
            <person name="Peck H.D. Jr."/>
            <person name="Fauque G."/>
            <person name="le Gall J."/>
            <person name="Teixeira M."/>
            <person name="Moura I."/>
            <person name="Moura J.J.G."/>
            <person name="Patil D."/>
            <person name="Huynh B.H."/>
        </authorList>
    </citation>
    <scope>PROTEIN SEQUENCE</scope>
</reference>
<sequence length="32" mass="3504">ALTGRRPSVVYLHAAQCTGCSEALLRTTKPFR</sequence>
<comment type="catalytic activity">
    <reaction>
        <text>2 Fe(III)-[cytochrome c3] + H2 = 2 Fe(II)-[cytochrome c3] + 2 H(+)</text>
        <dbReference type="Rhea" id="RHEA:20625"/>
        <dbReference type="Rhea" id="RHEA-COMP:11576"/>
        <dbReference type="Rhea" id="RHEA-COMP:11577"/>
        <dbReference type="ChEBI" id="CHEBI:15378"/>
        <dbReference type="ChEBI" id="CHEBI:18276"/>
        <dbReference type="ChEBI" id="CHEBI:29033"/>
        <dbReference type="ChEBI" id="CHEBI:29034"/>
        <dbReference type="EC" id="1.12.2.1"/>
    </reaction>
</comment>
<comment type="cofactor">
    <cofactor evidence="1">
        <name>[3Fe-4S] cluster</name>
        <dbReference type="ChEBI" id="CHEBI:21137"/>
    </cofactor>
    <text evidence="1">Binds 1 [3Fe-4S] cluster.</text>
</comment>
<comment type="cofactor">
    <cofactor evidence="1">
        <name>[4Fe-4S] cluster</name>
        <dbReference type="ChEBI" id="CHEBI:49883"/>
    </cofactor>
    <text evidence="1">Binds 2 [4Fe-4S] clusters.</text>
</comment>
<comment type="subunit">
    <text>Heterodimer of a large and a small subunit.</text>
</comment>
<comment type="subcellular location">
    <subcellularLocation>
        <location>Periplasm</location>
    </subcellularLocation>
</comment>
<comment type="similarity">
    <text evidence="2">Belongs to the [NiFe]/[NiFeSe] hydrogenase small subunit family.</text>
</comment>
<evidence type="ECO:0000250" key="1"/>
<evidence type="ECO:0000305" key="2"/>
<feature type="chain" id="PRO_0000204354" description="Periplasmic [NiFe] hydrogenase small subunit">
    <location>
        <begin position="1"/>
        <end position="32" status="greater than"/>
    </location>
</feature>
<feature type="binding site" evidence="1">
    <location>
        <position position="17"/>
    </location>
    <ligand>
        <name>[4Fe-4S] cluster</name>
        <dbReference type="ChEBI" id="CHEBI:49883"/>
        <label>1</label>
    </ligand>
</feature>
<feature type="binding site" evidence="1">
    <location>
        <position position="20"/>
    </location>
    <ligand>
        <name>[4Fe-4S] cluster</name>
        <dbReference type="ChEBI" id="CHEBI:49883"/>
        <label>1</label>
    </ligand>
</feature>
<feature type="non-terminal residue">
    <location>
        <position position="32"/>
    </location>
</feature>
<accession>P13062</accession>
<organism>
    <name type="scientific">Desulfovibrio multispirans</name>
    <dbReference type="NCBI Taxonomy" id="32018"/>
    <lineage>
        <taxon>Bacteria</taxon>
        <taxon>Pseudomonadati</taxon>
        <taxon>Thermodesulfobacteriota</taxon>
        <taxon>Desulfovibrionia</taxon>
        <taxon>Desulfovibrionales</taxon>
        <taxon>Desulfovibrionaceae</taxon>
        <taxon>Desulfovibrio</taxon>
    </lineage>
</organism>
<keyword id="KW-0003">3Fe-4S</keyword>
<keyword id="KW-0004">4Fe-4S</keyword>
<keyword id="KW-0903">Direct protein sequencing</keyword>
<keyword id="KW-0408">Iron</keyword>
<keyword id="KW-0411">Iron-sulfur</keyword>
<keyword id="KW-0479">Metal-binding</keyword>
<keyword id="KW-0560">Oxidoreductase</keyword>
<keyword id="KW-0574">Periplasm</keyword>
<protein>
    <recommendedName>
        <fullName>Periplasmic [NiFe] hydrogenase small subunit</fullName>
        <ecNumber>1.12.2.1</ecNumber>
    </recommendedName>
    <alternativeName>
        <fullName>NiFe hydrogenlyase small chain</fullName>
    </alternativeName>
</protein>
<proteinExistence type="evidence at protein level"/>
<gene>
    <name type="primary">hydA</name>
</gene>
<dbReference type="EC" id="1.12.2.1"/>
<dbReference type="PIR" id="E27480">
    <property type="entry name" value="E27480"/>
</dbReference>
<dbReference type="SMR" id="P13062"/>
<dbReference type="GO" id="GO:0042597">
    <property type="term" value="C:periplasmic space"/>
    <property type="evidence" value="ECO:0007669"/>
    <property type="project" value="UniProtKB-SubCell"/>
</dbReference>
<dbReference type="GO" id="GO:0051538">
    <property type="term" value="F:3 iron, 4 sulfur cluster binding"/>
    <property type="evidence" value="ECO:0007669"/>
    <property type="project" value="UniProtKB-KW"/>
</dbReference>
<dbReference type="GO" id="GO:0051539">
    <property type="term" value="F:4 iron, 4 sulfur cluster binding"/>
    <property type="evidence" value="ECO:0007669"/>
    <property type="project" value="UniProtKB-KW"/>
</dbReference>
<dbReference type="GO" id="GO:0047806">
    <property type="term" value="F:cytochrome-c3 hydrogenase activity"/>
    <property type="evidence" value="ECO:0007669"/>
    <property type="project" value="UniProtKB-EC"/>
</dbReference>
<dbReference type="GO" id="GO:0046872">
    <property type="term" value="F:metal ion binding"/>
    <property type="evidence" value="ECO:0007669"/>
    <property type="project" value="UniProtKB-KW"/>
</dbReference>
<dbReference type="Gene3D" id="3.40.50.700">
    <property type="entry name" value="NADH:ubiquinone oxidoreductase-like, 20kDa subunit"/>
    <property type="match status" value="1"/>
</dbReference>
<dbReference type="InterPro" id="IPR037024">
    <property type="entry name" value="NiFe_Hase_small_N_sf"/>
</dbReference>
<dbReference type="SUPFAM" id="SSF56770">
    <property type="entry name" value="HydA/Nqo6-like"/>
    <property type="match status" value="1"/>
</dbReference>